<name>BUTA_STAAS</name>
<organism>
    <name type="scientific">Staphylococcus aureus (strain MSSA476)</name>
    <dbReference type="NCBI Taxonomy" id="282459"/>
    <lineage>
        <taxon>Bacteria</taxon>
        <taxon>Bacillati</taxon>
        <taxon>Bacillota</taxon>
        <taxon>Bacilli</taxon>
        <taxon>Bacillales</taxon>
        <taxon>Staphylococcaceae</taxon>
        <taxon>Staphylococcus</taxon>
    </lineage>
</organism>
<protein>
    <recommendedName>
        <fullName>Diacetyl reductase [(S)-acetoin forming]</fullName>
        <ecNumber>1.1.1.304</ecNumber>
    </recommendedName>
    <alternativeName>
        <fullName>Acetoin(diacetyl) reductase</fullName>
        <shortName>AR</shortName>
    </alternativeName>
    <alternativeName>
        <fullName>Meso-2,3-butanediol dehydrogenase</fullName>
    </alternativeName>
</protein>
<dbReference type="EC" id="1.1.1.304"/>
<dbReference type="EMBL" id="BX571857">
    <property type="protein sequence ID" value="CAG41868.1"/>
    <property type="molecule type" value="Genomic_DNA"/>
</dbReference>
<dbReference type="RefSeq" id="WP_000183771.1">
    <property type="nucleotide sequence ID" value="NC_002953.3"/>
</dbReference>
<dbReference type="SMR" id="Q6GCZ8"/>
<dbReference type="KEGG" id="sas:SAS0101"/>
<dbReference type="HOGENOM" id="CLU_010194_1_0_9"/>
<dbReference type="GO" id="GO:0052588">
    <property type="term" value="F:diacetyl reductase ((S)-acetoin forming) (NAD+) activity"/>
    <property type="evidence" value="ECO:0007669"/>
    <property type="project" value="UniProtKB-EC"/>
</dbReference>
<dbReference type="GO" id="GO:0045150">
    <property type="term" value="P:acetoin catabolic process"/>
    <property type="evidence" value="ECO:0007669"/>
    <property type="project" value="InterPro"/>
</dbReference>
<dbReference type="CDD" id="cd05366">
    <property type="entry name" value="meso-BDH-like_SDR_c"/>
    <property type="match status" value="1"/>
</dbReference>
<dbReference type="FunFam" id="3.40.50.720:FF:000084">
    <property type="entry name" value="Short-chain dehydrogenase reductase"/>
    <property type="match status" value="1"/>
</dbReference>
<dbReference type="Gene3D" id="3.40.50.720">
    <property type="entry name" value="NAD(P)-binding Rossmann-like Domain"/>
    <property type="match status" value="1"/>
</dbReference>
<dbReference type="InterPro" id="IPR014007">
    <property type="entry name" value="23BDH"/>
</dbReference>
<dbReference type="InterPro" id="IPR036291">
    <property type="entry name" value="NAD(P)-bd_dom_sf"/>
</dbReference>
<dbReference type="InterPro" id="IPR020904">
    <property type="entry name" value="Sc_DH/Rdtase_CS"/>
</dbReference>
<dbReference type="InterPro" id="IPR002347">
    <property type="entry name" value="SDR_fam"/>
</dbReference>
<dbReference type="NCBIfam" id="TIGR02415">
    <property type="entry name" value="23BDH"/>
    <property type="match status" value="1"/>
</dbReference>
<dbReference type="NCBIfam" id="NF005559">
    <property type="entry name" value="PRK07231.1"/>
    <property type="match status" value="1"/>
</dbReference>
<dbReference type="NCBIfam" id="NF006394">
    <property type="entry name" value="PRK08643.1"/>
    <property type="match status" value="1"/>
</dbReference>
<dbReference type="PANTHER" id="PTHR43639">
    <property type="entry name" value="OXIDOREDUCTASE, SHORT-CHAIN DEHYDROGENASE/REDUCTASE FAMILY (AFU_ORTHOLOGUE AFUA_5G02870)"/>
    <property type="match status" value="1"/>
</dbReference>
<dbReference type="PANTHER" id="PTHR43639:SF1">
    <property type="entry name" value="SHORT-CHAIN DEHYDROGENASE_REDUCTASE FAMILY PROTEIN"/>
    <property type="match status" value="1"/>
</dbReference>
<dbReference type="Pfam" id="PF00106">
    <property type="entry name" value="adh_short"/>
    <property type="match status" value="1"/>
</dbReference>
<dbReference type="PRINTS" id="PR00081">
    <property type="entry name" value="GDHRDH"/>
</dbReference>
<dbReference type="PRINTS" id="PR00080">
    <property type="entry name" value="SDRFAMILY"/>
</dbReference>
<dbReference type="SMART" id="SM00822">
    <property type="entry name" value="PKS_KR"/>
    <property type="match status" value="1"/>
</dbReference>
<dbReference type="SUPFAM" id="SSF51735">
    <property type="entry name" value="NAD(P)-binding Rossmann-fold domains"/>
    <property type="match status" value="1"/>
</dbReference>
<dbReference type="PROSITE" id="PS00061">
    <property type="entry name" value="ADH_SHORT"/>
    <property type="match status" value="1"/>
</dbReference>
<keyword id="KW-0520">NAD</keyword>
<keyword id="KW-0560">Oxidoreductase</keyword>
<reference key="1">
    <citation type="journal article" date="2004" name="Proc. Natl. Acad. Sci. U.S.A.">
        <title>Complete genomes of two clinical Staphylococcus aureus strains: evidence for the rapid evolution of virulence and drug resistance.</title>
        <authorList>
            <person name="Holden M.T.G."/>
            <person name="Feil E.J."/>
            <person name="Lindsay J.A."/>
            <person name="Peacock S.J."/>
            <person name="Day N.P.J."/>
            <person name="Enright M.C."/>
            <person name="Foster T.J."/>
            <person name="Moore C.E."/>
            <person name="Hurst L."/>
            <person name="Atkin R."/>
            <person name="Barron A."/>
            <person name="Bason N."/>
            <person name="Bentley S.D."/>
            <person name="Chillingworth C."/>
            <person name="Chillingworth T."/>
            <person name="Churcher C."/>
            <person name="Clark L."/>
            <person name="Corton C."/>
            <person name="Cronin A."/>
            <person name="Doggett J."/>
            <person name="Dowd L."/>
            <person name="Feltwell T."/>
            <person name="Hance Z."/>
            <person name="Harris B."/>
            <person name="Hauser H."/>
            <person name="Holroyd S."/>
            <person name="Jagels K."/>
            <person name="James K.D."/>
            <person name="Lennard N."/>
            <person name="Line A."/>
            <person name="Mayes R."/>
            <person name="Moule S."/>
            <person name="Mungall K."/>
            <person name="Ormond D."/>
            <person name="Quail M.A."/>
            <person name="Rabbinowitsch E."/>
            <person name="Rutherford K.M."/>
            <person name="Sanders M."/>
            <person name="Sharp S."/>
            <person name="Simmonds M."/>
            <person name="Stevens K."/>
            <person name="Whitehead S."/>
            <person name="Barrell B.G."/>
            <person name="Spratt B.G."/>
            <person name="Parkhill J."/>
        </authorList>
    </citation>
    <scope>NUCLEOTIDE SEQUENCE [LARGE SCALE GENOMIC DNA]</scope>
    <source>
        <strain>MSSA476</strain>
    </source>
</reference>
<gene>
    <name type="primary">butA</name>
    <name type="ordered locus">SAS0101</name>
</gene>
<feature type="chain" id="PRO_0000054543" description="Diacetyl reductase [(S)-acetoin forming]">
    <location>
        <begin position="1"/>
        <end position="258"/>
    </location>
</feature>
<feature type="active site" description="Proton acceptor" evidence="2">
    <location>
        <position position="154"/>
    </location>
</feature>
<feature type="active site" evidence="1">
    <location>
        <position position="158"/>
    </location>
</feature>
<feature type="binding site" evidence="1">
    <location>
        <begin position="8"/>
        <end position="32"/>
    </location>
    <ligand>
        <name>NAD(+)</name>
        <dbReference type="ChEBI" id="CHEBI:57540"/>
    </ligand>
</feature>
<feature type="binding site" evidence="1">
    <location>
        <position position="141"/>
    </location>
    <ligand>
        <name>substrate</name>
    </ligand>
</feature>
<sequence length="258" mass="27216">MTNNKVALVTGGAQGIGFKIAERLVEDGFKVAVVDFNEEGAKAAALKLSSDGTKAIAIKADVSNRDDVFNAVRQTAAQFGDFHVMVNNAGLGPTTPIDTITEEQFKTVYGVNVAGVLWGIQAAHEQFKKFNHGGKIINATSQAGVEGNPGLSLYCSTKFAVRGLTQVAAQDLASEGITVNAFAPGIVQTPMMESIAVATAEEAGKPEAWGWEQFTSQIALGRVSQPEDVSNVVSFLAGKDSDYITGQTIIVDGGMRFR</sequence>
<accession>Q6GCZ8</accession>
<comment type="function">
    <text evidence="1">Catalyzes the irreversible reduction of 2,3-butanediol to (S)-acetoin in the presence of NADH.</text>
</comment>
<comment type="catalytic activity">
    <reaction>
        <text>(S)-acetoin + NAD(+) = diacetyl + NADH + H(+)</text>
        <dbReference type="Rhea" id="RHEA:27286"/>
        <dbReference type="ChEBI" id="CHEBI:15378"/>
        <dbReference type="ChEBI" id="CHEBI:15687"/>
        <dbReference type="ChEBI" id="CHEBI:16583"/>
        <dbReference type="ChEBI" id="CHEBI:57540"/>
        <dbReference type="ChEBI" id="CHEBI:57945"/>
        <dbReference type="EC" id="1.1.1.304"/>
    </reaction>
</comment>
<comment type="similarity">
    <text evidence="3">Belongs to the short-chain dehydrogenases/reductases (SDR) family.</text>
</comment>
<proteinExistence type="inferred from homology"/>
<evidence type="ECO:0000250" key="1"/>
<evidence type="ECO:0000255" key="2">
    <source>
        <dbReference type="PROSITE-ProRule" id="PRU10001"/>
    </source>
</evidence>
<evidence type="ECO:0000305" key="3"/>